<organism>
    <name type="scientific">Sorghum bicolor</name>
    <name type="common">Sorghum</name>
    <name type="synonym">Sorghum vulgare</name>
    <dbReference type="NCBI Taxonomy" id="4558"/>
    <lineage>
        <taxon>Eukaryota</taxon>
        <taxon>Viridiplantae</taxon>
        <taxon>Streptophyta</taxon>
        <taxon>Embryophyta</taxon>
        <taxon>Tracheophyta</taxon>
        <taxon>Spermatophyta</taxon>
        <taxon>Magnoliopsida</taxon>
        <taxon>Liliopsida</taxon>
        <taxon>Poales</taxon>
        <taxon>Poaceae</taxon>
        <taxon>PACMAD clade</taxon>
        <taxon>Panicoideae</taxon>
        <taxon>Andropogonodae</taxon>
        <taxon>Andropogoneae</taxon>
        <taxon>Sorghinae</taxon>
        <taxon>Sorghum</taxon>
    </lineage>
</organism>
<proteinExistence type="inferred from homology"/>
<dbReference type="EC" id="7.1.1.-" evidence="1"/>
<dbReference type="EMBL" id="EF115542">
    <property type="protein sequence ID" value="ABK79552.1"/>
    <property type="molecule type" value="Genomic_DNA"/>
</dbReference>
<dbReference type="RefSeq" id="YP_899463.1">
    <property type="nucleotide sequence ID" value="NC_008602.1"/>
</dbReference>
<dbReference type="SMR" id="A1E9Y0"/>
<dbReference type="FunCoup" id="A1E9Y0">
    <property type="interactions" value="10"/>
</dbReference>
<dbReference type="STRING" id="4558.A1E9Y0"/>
<dbReference type="GeneID" id="4549203"/>
<dbReference type="KEGG" id="sbi:4549203"/>
<dbReference type="InParanoid" id="A1E9Y0"/>
<dbReference type="OrthoDB" id="722484at2759"/>
<dbReference type="Proteomes" id="UP000000768">
    <property type="component" value="Chloroplast"/>
</dbReference>
<dbReference type="GO" id="GO:0009535">
    <property type="term" value="C:chloroplast thylakoid membrane"/>
    <property type="evidence" value="ECO:0007669"/>
    <property type="project" value="UniProtKB-SubCell"/>
</dbReference>
<dbReference type="GO" id="GO:0051287">
    <property type="term" value="F:NAD binding"/>
    <property type="evidence" value="ECO:0007669"/>
    <property type="project" value="InterPro"/>
</dbReference>
<dbReference type="GO" id="GO:0016655">
    <property type="term" value="F:oxidoreductase activity, acting on NAD(P)H, quinone or similar compound as acceptor"/>
    <property type="evidence" value="ECO:0007669"/>
    <property type="project" value="UniProtKB-UniRule"/>
</dbReference>
<dbReference type="GO" id="GO:0048038">
    <property type="term" value="F:quinone binding"/>
    <property type="evidence" value="ECO:0007669"/>
    <property type="project" value="UniProtKB-KW"/>
</dbReference>
<dbReference type="GO" id="GO:0019684">
    <property type="term" value="P:photosynthesis, light reaction"/>
    <property type="evidence" value="ECO:0007669"/>
    <property type="project" value="UniProtKB-UniRule"/>
</dbReference>
<dbReference type="Gene3D" id="1.10.645.10">
    <property type="entry name" value="Cytochrome-c3 Hydrogenase, chain B"/>
    <property type="match status" value="1"/>
</dbReference>
<dbReference type="HAMAP" id="MF_01358">
    <property type="entry name" value="NDH1_NuoD"/>
    <property type="match status" value="1"/>
</dbReference>
<dbReference type="InterPro" id="IPR001135">
    <property type="entry name" value="NADH_Q_OxRdtase_suD"/>
</dbReference>
<dbReference type="InterPro" id="IPR014029">
    <property type="entry name" value="NADH_UbQ_OxRdtase_49kDa_CS"/>
</dbReference>
<dbReference type="InterPro" id="IPR022885">
    <property type="entry name" value="NDH1_su_D/H"/>
</dbReference>
<dbReference type="InterPro" id="IPR029014">
    <property type="entry name" value="NiFe-Hase_large"/>
</dbReference>
<dbReference type="NCBIfam" id="NF004739">
    <property type="entry name" value="PRK06075.1"/>
    <property type="match status" value="1"/>
</dbReference>
<dbReference type="NCBIfam" id="NF005649">
    <property type="entry name" value="PRK07415.1"/>
    <property type="match status" value="1"/>
</dbReference>
<dbReference type="PANTHER" id="PTHR11993:SF10">
    <property type="entry name" value="NADH DEHYDROGENASE [UBIQUINONE] IRON-SULFUR PROTEIN 2, MITOCHONDRIAL"/>
    <property type="match status" value="1"/>
</dbReference>
<dbReference type="PANTHER" id="PTHR11993">
    <property type="entry name" value="NADH-UBIQUINONE OXIDOREDUCTASE 49 KDA SUBUNIT"/>
    <property type="match status" value="1"/>
</dbReference>
<dbReference type="Pfam" id="PF00346">
    <property type="entry name" value="Complex1_49kDa"/>
    <property type="match status" value="1"/>
</dbReference>
<dbReference type="SUPFAM" id="SSF56762">
    <property type="entry name" value="HydB/Nqo4-like"/>
    <property type="match status" value="1"/>
</dbReference>
<dbReference type="PROSITE" id="PS00535">
    <property type="entry name" value="COMPLEX1_49K"/>
    <property type="match status" value="1"/>
</dbReference>
<name>NDHH_SORBI</name>
<sequence length="393" mass="45686">MSLSLKRKDLMIVNMGPQHPSMHGVLRLIVTLDGEDVIDCEPILGYLHRGMEKIAENRSIIQYLPYVTRWDYLATMFTEAITVNAPEFLENIQIPQRASYIRVIMLELSRIASHLLWLGPFMADLGAQTPFFYIFRERELIYDLFEAATGMRMMHNYFRIGGVAADLPYGWMDKCLDFCDYFLQGVVEYQQLITRNPIFLERVEGVGFISGEEAVNWGLSGPMLRASGIQWDLRKIDPYESYNQFDWKVQWQKEGDSLARYLVRVGEMRESIKIIQQAVEKIPGGPYENLEARRFKKAKNPEWNDFEYRFLGKKPSPNFELSKQELYVRVEAPKGELGIYLVGDDSLFPWRWKIRPPGFINLQILPQLVKKMKLADIMTILGSIDIIMGEVDR</sequence>
<comment type="function">
    <text evidence="1">NDH shuttles electrons from NAD(P)H:plastoquinone, via FMN and iron-sulfur (Fe-S) centers, to quinones in the photosynthetic chain and possibly in a chloroplast respiratory chain. The immediate electron acceptor for the enzyme in this species is believed to be plastoquinone. Couples the redox reaction to proton translocation, and thus conserves the redox energy in a proton gradient.</text>
</comment>
<comment type="catalytic activity">
    <reaction evidence="1">
        <text>a plastoquinone + NADH + (n+1) H(+)(in) = a plastoquinol + NAD(+) + n H(+)(out)</text>
        <dbReference type="Rhea" id="RHEA:42608"/>
        <dbReference type="Rhea" id="RHEA-COMP:9561"/>
        <dbReference type="Rhea" id="RHEA-COMP:9562"/>
        <dbReference type="ChEBI" id="CHEBI:15378"/>
        <dbReference type="ChEBI" id="CHEBI:17757"/>
        <dbReference type="ChEBI" id="CHEBI:57540"/>
        <dbReference type="ChEBI" id="CHEBI:57945"/>
        <dbReference type="ChEBI" id="CHEBI:62192"/>
    </reaction>
</comment>
<comment type="catalytic activity">
    <reaction evidence="1">
        <text>a plastoquinone + NADPH + (n+1) H(+)(in) = a plastoquinol + NADP(+) + n H(+)(out)</text>
        <dbReference type="Rhea" id="RHEA:42612"/>
        <dbReference type="Rhea" id="RHEA-COMP:9561"/>
        <dbReference type="Rhea" id="RHEA-COMP:9562"/>
        <dbReference type="ChEBI" id="CHEBI:15378"/>
        <dbReference type="ChEBI" id="CHEBI:17757"/>
        <dbReference type="ChEBI" id="CHEBI:57783"/>
        <dbReference type="ChEBI" id="CHEBI:58349"/>
        <dbReference type="ChEBI" id="CHEBI:62192"/>
    </reaction>
</comment>
<comment type="subunit">
    <text evidence="1">NDH is composed of at least 16 different subunits, 5 of which are encoded in the nucleus.</text>
</comment>
<comment type="subcellular location">
    <subcellularLocation>
        <location evidence="1">Plastid</location>
        <location evidence="1">Chloroplast thylakoid membrane</location>
        <topology evidence="1">Peripheral membrane protein</topology>
        <orientation evidence="1">Stromal side</orientation>
    </subcellularLocation>
</comment>
<comment type="similarity">
    <text evidence="1">Belongs to the complex I 49 kDa subunit family.</text>
</comment>
<keyword id="KW-0150">Chloroplast</keyword>
<keyword id="KW-0472">Membrane</keyword>
<keyword id="KW-0520">NAD</keyword>
<keyword id="KW-0521">NADP</keyword>
<keyword id="KW-0934">Plastid</keyword>
<keyword id="KW-0618">Plastoquinone</keyword>
<keyword id="KW-0874">Quinone</keyword>
<keyword id="KW-1185">Reference proteome</keyword>
<keyword id="KW-0793">Thylakoid</keyword>
<keyword id="KW-1278">Translocase</keyword>
<keyword id="KW-0813">Transport</keyword>
<reference key="1">
    <citation type="journal article" date="2007" name="Theor. Appl. Genet.">
        <title>Complete chloroplast genome sequences of Hordeum vulgare, Sorghum bicolor and Agrostis stolonifera, and comparative analyses with other grass genomes.</title>
        <authorList>
            <person name="Saski C."/>
            <person name="Lee S.-B."/>
            <person name="Fjellheim S."/>
            <person name="Guda C."/>
            <person name="Jansen R.K."/>
            <person name="Luo H."/>
            <person name="Tomkins J."/>
            <person name="Rognli O.A."/>
            <person name="Daniell H."/>
            <person name="Clarke J.L."/>
        </authorList>
    </citation>
    <scope>NUCLEOTIDE SEQUENCE [LARGE SCALE GENOMIC DNA]</scope>
    <source>
        <strain>cv. BTx623</strain>
    </source>
</reference>
<feature type="chain" id="PRO_0000358027" description="NAD(P)H-quinone oxidoreductase subunit H, chloroplastic">
    <location>
        <begin position="1"/>
        <end position="393"/>
    </location>
</feature>
<accession>A1E9Y0</accession>
<evidence type="ECO:0000255" key="1">
    <source>
        <dbReference type="HAMAP-Rule" id="MF_01358"/>
    </source>
</evidence>
<protein>
    <recommendedName>
        <fullName evidence="1">NAD(P)H-quinone oxidoreductase subunit H, chloroplastic</fullName>
        <ecNumber evidence="1">7.1.1.-</ecNumber>
    </recommendedName>
    <alternativeName>
        <fullName>NAD(P)H dehydrogenase subunit H</fullName>
    </alternativeName>
    <alternativeName>
        <fullName evidence="1">NADH-plastoquinone oxidoreductase 49 kDa subunit</fullName>
    </alternativeName>
    <alternativeName>
        <fullName evidence="1">NADH-plastoquinone oxidoreductase subunit H</fullName>
    </alternativeName>
</protein>
<gene>
    <name evidence="1" type="primary">ndhH</name>
</gene>
<geneLocation type="chloroplast"/>